<evidence type="ECO:0000250" key="1">
    <source>
        <dbReference type="UniProtKB" id="P03891"/>
    </source>
</evidence>
<evidence type="ECO:0000250" key="2">
    <source>
        <dbReference type="UniProtKB" id="P03892"/>
    </source>
</evidence>
<evidence type="ECO:0000255" key="3"/>
<evidence type="ECO:0000305" key="4"/>
<organism>
    <name type="scientific">Mammuthus primigenius</name>
    <name type="common">Siberian woolly mammoth</name>
    <dbReference type="NCBI Taxonomy" id="37349"/>
    <lineage>
        <taxon>Eukaryota</taxon>
        <taxon>Metazoa</taxon>
        <taxon>Chordata</taxon>
        <taxon>Craniata</taxon>
        <taxon>Vertebrata</taxon>
        <taxon>Euteleostomi</taxon>
        <taxon>Mammalia</taxon>
        <taxon>Eutheria</taxon>
        <taxon>Afrotheria</taxon>
        <taxon>Proboscidea</taxon>
        <taxon>Elephantidae</taxon>
        <taxon>Mammuthus</taxon>
    </lineage>
</organism>
<accession>Q38PS1</accession>
<accession>Q2I3I6</accession>
<keyword id="KW-0249">Electron transport</keyword>
<keyword id="KW-0952">Extinct organism protein</keyword>
<keyword id="KW-0472">Membrane</keyword>
<keyword id="KW-0496">Mitochondrion</keyword>
<keyword id="KW-0999">Mitochondrion inner membrane</keyword>
<keyword id="KW-0520">NAD</keyword>
<keyword id="KW-0679">Respiratory chain</keyword>
<keyword id="KW-1278">Translocase</keyword>
<keyword id="KW-0812">Transmembrane</keyword>
<keyword id="KW-1133">Transmembrane helix</keyword>
<keyword id="KW-0813">Transport</keyword>
<keyword id="KW-0830">Ubiquinone</keyword>
<name>NU2M_MAMPR</name>
<protein>
    <recommendedName>
        <fullName evidence="1">NADH-ubiquinone oxidoreductase chain 2</fullName>
        <ecNumber evidence="1">7.1.1.2</ecNumber>
    </recommendedName>
    <alternativeName>
        <fullName>NADH dehydrogenase subunit 2</fullName>
    </alternativeName>
</protein>
<dbReference type="EC" id="7.1.1.2" evidence="1"/>
<dbReference type="EMBL" id="DQ188829">
    <property type="protein sequence ID" value="ABA29785.2"/>
    <property type="molecule type" value="Genomic_DNA"/>
</dbReference>
<dbReference type="EMBL" id="DQ316067">
    <property type="protein sequence ID" value="ABC17879.1"/>
    <property type="molecule type" value="Genomic_DNA"/>
</dbReference>
<dbReference type="RefSeq" id="YP_398755.2">
    <property type="nucleotide sequence ID" value="NC_007596.2"/>
</dbReference>
<dbReference type="SMR" id="Q38PS1"/>
<dbReference type="GeneID" id="3773142"/>
<dbReference type="CTD" id="4536"/>
<dbReference type="GO" id="GO:0005743">
    <property type="term" value="C:mitochondrial inner membrane"/>
    <property type="evidence" value="ECO:0000250"/>
    <property type="project" value="UniProtKB"/>
</dbReference>
<dbReference type="GO" id="GO:0008137">
    <property type="term" value="F:NADH dehydrogenase (ubiquinone) activity"/>
    <property type="evidence" value="ECO:0000250"/>
    <property type="project" value="UniProtKB"/>
</dbReference>
<dbReference type="GO" id="GO:0006120">
    <property type="term" value="P:mitochondrial electron transport, NADH to ubiquinone"/>
    <property type="evidence" value="ECO:0000250"/>
    <property type="project" value="UniProtKB"/>
</dbReference>
<dbReference type="GO" id="GO:0032981">
    <property type="term" value="P:mitochondrial respiratory chain complex I assembly"/>
    <property type="evidence" value="ECO:0000250"/>
    <property type="project" value="UniProtKB"/>
</dbReference>
<dbReference type="InterPro" id="IPR050175">
    <property type="entry name" value="Complex_I_Subunit_2"/>
</dbReference>
<dbReference type="InterPro" id="IPR010933">
    <property type="entry name" value="NADH_DH_su2_C"/>
</dbReference>
<dbReference type="InterPro" id="IPR003917">
    <property type="entry name" value="NADH_UbQ_OxRdtase_chain2"/>
</dbReference>
<dbReference type="InterPro" id="IPR001750">
    <property type="entry name" value="ND/Mrp_TM"/>
</dbReference>
<dbReference type="PANTHER" id="PTHR46552">
    <property type="entry name" value="NADH-UBIQUINONE OXIDOREDUCTASE CHAIN 2"/>
    <property type="match status" value="1"/>
</dbReference>
<dbReference type="PANTHER" id="PTHR46552:SF1">
    <property type="entry name" value="NADH-UBIQUINONE OXIDOREDUCTASE CHAIN 2"/>
    <property type="match status" value="1"/>
</dbReference>
<dbReference type="Pfam" id="PF06444">
    <property type="entry name" value="NADH_dehy_S2_C"/>
    <property type="match status" value="1"/>
</dbReference>
<dbReference type="Pfam" id="PF00361">
    <property type="entry name" value="Proton_antipo_M"/>
    <property type="match status" value="1"/>
</dbReference>
<dbReference type="PRINTS" id="PR01436">
    <property type="entry name" value="NADHDHGNASE2"/>
</dbReference>
<gene>
    <name evidence="1" type="primary">MT-ND2</name>
    <name type="synonym">MTND2</name>
    <name type="synonym">NADH2</name>
    <name type="synonym">ND2</name>
</gene>
<geneLocation type="mitochondrion"/>
<reference key="1">
    <citation type="journal article" date="2006" name="Nature">
        <title>Multiplex amplification of the mammoth mitochondrial genome and the evolution of Elephantidae.</title>
        <authorList>
            <person name="Krause J."/>
            <person name="Dear P.H."/>
            <person name="Pollack J.L."/>
            <person name="Slatkin M."/>
            <person name="Spriggs H."/>
            <person name="Barnes I."/>
            <person name="Lister A.M."/>
            <person name="Ebersberger I."/>
            <person name="Paeaebo S."/>
            <person name="Hofreiter M."/>
        </authorList>
    </citation>
    <scope>NUCLEOTIDE SEQUENCE [GENOMIC DNA]</scope>
</reference>
<reference key="2">
    <citation type="submission" date="2006-11" db="EMBL/GenBank/DDBJ databases">
        <authorList>
            <person name="Krause J."/>
            <person name="Dear P.H."/>
            <person name="Pollack J.L."/>
            <person name="Slatkin M."/>
            <person name="Spriggs H."/>
            <person name="Barnes I."/>
            <person name="Lister A.M."/>
            <person name="Paabo S."/>
            <person name="Hofreiter M."/>
        </authorList>
    </citation>
    <scope>SEQUENCE REVISION TO 199; 231; 256; 265; 279 AND 300</scope>
</reference>
<reference key="3">
    <citation type="journal article" date="2006" name="PLoS Biol.">
        <title>Complete mitochondrial genome and phylogeny of Pleistocene mammoth Mammuthus primigenius.</title>
        <authorList>
            <person name="Rogaev E.I."/>
            <person name="Moliaka Y.K."/>
            <person name="Malyarchuk B.A."/>
            <person name="Kondrashov F.A."/>
            <person name="Derenko M.V."/>
            <person name="Chumakov I."/>
            <person name="Grigorenko A.P."/>
        </authorList>
    </citation>
    <scope>NUCLEOTIDE SEQUENCE [GENOMIC DNA]</scope>
    <source>
        <tissue>Muscle</tissue>
    </source>
</reference>
<comment type="function">
    <text evidence="1">Core subunit of the mitochondrial membrane respiratory chain NADH dehydrogenase (Complex I) which catalyzes electron transfer from NADH through the respiratory chain, using ubiquinone as an electron acceptor. Essential for the catalytic activity and assembly of complex I.</text>
</comment>
<comment type="catalytic activity">
    <reaction evidence="1">
        <text>a ubiquinone + NADH + 5 H(+)(in) = a ubiquinol + NAD(+) + 4 H(+)(out)</text>
        <dbReference type="Rhea" id="RHEA:29091"/>
        <dbReference type="Rhea" id="RHEA-COMP:9565"/>
        <dbReference type="Rhea" id="RHEA-COMP:9566"/>
        <dbReference type="ChEBI" id="CHEBI:15378"/>
        <dbReference type="ChEBI" id="CHEBI:16389"/>
        <dbReference type="ChEBI" id="CHEBI:17976"/>
        <dbReference type="ChEBI" id="CHEBI:57540"/>
        <dbReference type="ChEBI" id="CHEBI:57945"/>
        <dbReference type="EC" id="7.1.1.2"/>
    </reaction>
</comment>
<comment type="subunit">
    <text evidence="1 2">Core subunit of respiratory chain NADH dehydrogenase (Complex I) which is composed of 45 different subunits. Interacts with TMEM242 (By similarity).</text>
</comment>
<comment type="subcellular location">
    <subcellularLocation>
        <location evidence="2">Mitochondrion inner membrane</location>
        <topology evidence="3">Multi-pass membrane protein</topology>
    </subcellularLocation>
</comment>
<comment type="similarity">
    <text evidence="4">Belongs to the complex I subunit 2 family.</text>
</comment>
<proteinExistence type="inferred from homology"/>
<sequence length="347" mass="38913">MNPLALSLILTTLLAGTLITMMSSHWLTAWMGLEMNMLTMIPILMKTTNPRSTEAATKYFMTQATASMMLMMALTINLMYSGQWSIMKMTNPVASNVALMALMTKLGSAPFHFWVPEVTQGVELTSGMILLTWQKLAPLSLLYQMATYTNTNLIYLSGLLSILIGGWGGLNQTQLRKILAYSSISHMGWMLIILPFNPTLTLLNLAIYILLTLSIFMILANTLTTSMSSLTLMWNKTPAMTIMLMTTLLSLGGLPPLSGFTPKWLMIHELTKNNSIIMPLTMAIMTLLNMYFYMRLIYYSSLTILPSTNNMKMTWQFTSTKHTMMLPTLITLSNMLLPLTPMISMLE</sequence>
<feature type="chain" id="PRO_0000232849" description="NADH-ubiquinone oxidoreductase chain 2">
    <location>
        <begin position="1"/>
        <end position="347"/>
    </location>
</feature>
<feature type="transmembrane region" description="Helical" evidence="3">
    <location>
        <begin position="3"/>
        <end position="23"/>
    </location>
</feature>
<feature type="transmembrane region" description="Helical" evidence="3">
    <location>
        <begin position="25"/>
        <end position="45"/>
    </location>
</feature>
<feature type="transmembrane region" description="Helical" evidence="3">
    <location>
        <begin position="59"/>
        <end position="79"/>
    </location>
</feature>
<feature type="transmembrane region" description="Helical" evidence="3">
    <location>
        <begin position="93"/>
        <end position="115"/>
    </location>
</feature>
<feature type="transmembrane region" description="Helical" evidence="3">
    <location>
        <begin position="150"/>
        <end position="170"/>
    </location>
</feature>
<feature type="transmembrane region" description="Helical" evidence="3">
    <location>
        <begin position="178"/>
        <end position="198"/>
    </location>
</feature>
<feature type="transmembrane region" description="Helical" evidence="3">
    <location>
        <begin position="200"/>
        <end position="220"/>
    </location>
</feature>
<feature type="transmembrane region" description="Helical" evidence="3">
    <location>
        <begin position="240"/>
        <end position="260"/>
    </location>
</feature>
<feature type="transmembrane region" description="Helical" evidence="3">
    <location>
        <begin position="274"/>
        <end position="294"/>
    </location>
</feature>
<feature type="transmembrane region" description="Helical" evidence="3">
    <location>
        <begin position="326"/>
        <end position="346"/>
    </location>
</feature>
<feature type="sequence conflict" description="In Ref. 3; ABC17879." evidence="4" ref="3">
    <original>S</original>
    <variation>N</variation>
    <location>
        <position position="319"/>
    </location>
</feature>